<name>ANRX_NOSS1</name>
<protein>
    <recommendedName>
        <fullName evidence="1">Anaredoxin</fullName>
        <ecNumber>3.1.-.-</ecNumber>
    </recommendedName>
    <alternativeName>
        <fullName evidence="2">Putative HNH nuclease</fullName>
    </alternativeName>
</protein>
<organism>
    <name type="scientific">Nostoc sp. (strain PCC 7120 / SAG 25.82 / UTEX 2576)</name>
    <dbReference type="NCBI Taxonomy" id="103690"/>
    <lineage>
        <taxon>Bacteria</taxon>
        <taxon>Bacillati</taxon>
        <taxon>Cyanobacteriota</taxon>
        <taxon>Cyanophyceae</taxon>
        <taxon>Nostocales</taxon>
        <taxon>Nostocaceae</taxon>
        <taxon>Nostoc</taxon>
    </lineage>
</organism>
<accession>Q44141</accession>
<sequence length="76" mass="8905">MTQKRPYEHRKAQKQVKNLESYQCMVCWEVNSKANGHHLIPYSEGGSADIQNMMTLCPSCHTKYHKGELKIDIHRF</sequence>
<evidence type="ECO:0000303" key="1">
    <source ref="1"/>
</evidence>
<evidence type="ECO:0000305" key="2"/>
<feature type="chain" id="PRO_0000064600" description="Anaredoxin">
    <location>
        <begin position="1"/>
        <end position="76"/>
    </location>
</feature>
<feature type="domain" description="HNH">
    <location>
        <begin position="24"/>
        <end position="66"/>
    </location>
</feature>
<feature type="sequence conflict" description="In Ref. 1; AAC82969." evidence="2" ref="1">
    <original>I</original>
    <variation>V</variation>
    <location>
        <position position="40"/>
    </location>
</feature>
<feature type="sequence conflict" description="In Ref. 1; AAC82969." evidence="2" ref="1">
    <original>KYHKGELKIDIHRF</original>
    <variation>SIIKVN</variation>
    <location>
        <begin position="63"/>
        <end position="76"/>
    </location>
</feature>
<proteinExistence type="inferred from homology"/>
<keyword id="KW-0378">Hydrolase</keyword>
<keyword id="KW-0540">Nuclease</keyword>
<keyword id="KW-0560">Oxidoreductase</keyword>
<keyword id="KW-1185">Reference proteome</keyword>
<dbReference type="EC" id="3.1.-.-"/>
<dbReference type="EMBL" id="U38537">
    <property type="protein sequence ID" value="AAC82969.1"/>
    <property type="molecule type" value="Genomic_DNA"/>
</dbReference>
<dbReference type="EMBL" id="BA000019">
    <property type="protein sequence ID" value="BAB73410.1"/>
    <property type="molecule type" value="Genomic_DNA"/>
</dbReference>
<dbReference type="PIR" id="AB1988">
    <property type="entry name" value="AB1988"/>
</dbReference>
<dbReference type="RefSeq" id="WP_010995625.1">
    <property type="nucleotide sequence ID" value="NZ_RSCN01000040.1"/>
</dbReference>
<dbReference type="SMR" id="Q44141"/>
<dbReference type="STRING" id="103690.gene:10493468"/>
<dbReference type="KEGG" id="ana:asr1453"/>
<dbReference type="eggNOG" id="COG1403">
    <property type="taxonomic scope" value="Bacteria"/>
</dbReference>
<dbReference type="OrthoDB" id="9779761at2"/>
<dbReference type="Proteomes" id="UP000002483">
    <property type="component" value="Chromosome"/>
</dbReference>
<dbReference type="GO" id="GO:0004519">
    <property type="term" value="F:endonuclease activity"/>
    <property type="evidence" value="ECO:0007669"/>
    <property type="project" value="InterPro"/>
</dbReference>
<dbReference type="GO" id="GO:0003676">
    <property type="term" value="F:nucleic acid binding"/>
    <property type="evidence" value="ECO:0007669"/>
    <property type="project" value="InterPro"/>
</dbReference>
<dbReference type="GO" id="GO:0016491">
    <property type="term" value="F:oxidoreductase activity"/>
    <property type="evidence" value="ECO:0007669"/>
    <property type="project" value="UniProtKB-KW"/>
</dbReference>
<dbReference type="GO" id="GO:0008270">
    <property type="term" value="F:zinc ion binding"/>
    <property type="evidence" value="ECO:0007669"/>
    <property type="project" value="InterPro"/>
</dbReference>
<dbReference type="CDD" id="cd00085">
    <property type="entry name" value="HNHc"/>
    <property type="match status" value="1"/>
</dbReference>
<dbReference type="Gene3D" id="1.10.30.50">
    <property type="match status" value="1"/>
</dbReference>
<dbReference type="InterPro" id="IPR002711">
    <property type="entry name" value="HNH"/>
</dbReference>
<dbReference type="InterPro" id="IPR003615">
    <property type="entry name" value="HNH_nuc"/>
</dbReference>
<dbReference type="Pfam" id="PF01844">
    <property type="entry name" value="HNH"/>
    <property type="match status" value="1"/>
</dbReference>
<dbReference type="SMART" id="SM00507">
    <property type="entry name" value="HNHc"/>
    <property type="match status" value="1"/>
</dbReference>
<gene>
    <name evidence="1" type="primary">adx</name>
    <name type="ordered locus">asr1453</name>
</gene>
<reference key="1">
    <citation type="submission" date="1995-10" db="EMBL/GenBank/DDBJ databases">
        <authorList>
            <person name="Lammers P.J."/>
            <person name="Trujillo-Provencio C."/>
            <person name="Sanchez C."/>
            <person name="Carillo M."/>
        </authorList>
    </citation>
    <scope>NUCLEOTIDE SEQUENCE [GENOMIC DNA]</scope>
</reference>
<reference key="2">
    <citation type="journal article" date="2001" name="DNA Res.">
        <title>Complete genomic sequence of the filamentous nitrogen-fixing cyanobacterium Anabaena sp. strain PCC 7120.</title>
        <authorList>
            <person name="Kaneko T."/>
            <person name="Nakamura Y."/>
            <person name="Wolk C.P."/>
            <person name="Kuritz T."/>
            <person name="Sasamoto S."/>
            <person name="Watanabe A."/>
            <person name="Iriguchi M."/>
            <person name="Ishikawa A."/>
            <person name="Kawashima K."/>
            <person name="Kimura T."/>
            <person name="Kishida Y."/>
            <person name="Kohara M."/>
            <person name="Matsumoto M."/>
            <person name="Matsuno A."/>
            <person name="Muraki A."/>
            <person name="Nakazaki N."/>
            <person name="Shimpo S."/>
            <person name="Sugimoto M."/>
            <person name="Takazawa M."/>
            <person name="Yamada M."/>
            <person name="Yasuda M."/>
            <person name="Tabata S."/>
        </authorList>
    </citation>
    <scope>NUCLEOTIDE SEQUENCE [LARGE SCALE GENOMIC DNA]</scope>
    <source>
        <strain>PCC 7120 / SAG 25.82 / UTEX 2576</strain>
    </source>
</reference>
<comment type="function">
    <text>Putative P-450 reductase.</text>
</comment>
<comment type="similarity">
    <text evidence="2">Belongs to the HNH nuclease family.</text>
</comment>